<evidence type="ECO:0000305" key="1"/>
<accession>A2A5X4</accession>
<comment type="similarity">
    <text evidence="1">Belongs to the KRTAP type 10 family.</text>
</comment>
<name>KR291_MOUSE</name>
<protein>
    <recommendedName>
        <fullName>Keratin-associated protein 29-1</fullName>
    </recommendedName>
    <alternativeName>
        <fullName>Keratin-associated protein 29.2</fullName>
    </alternativeName>
</protein>
<organism>
    <name type="scientific">Mus musculus</name>
    <name type="common">Mouse</name>
    <dbReference type="NCBI Taxonomy" id="10090"/>
    <lineage>
        <taxon>Eukaryota</taxon>
        <taxon>Metazoa</taxon>
        <taxon>Chordata</taxon>
        <taxon>Craniata</taxon>
        <taxon>Vertebrata</taxon>
        <taxon>Euteleostomi</taxon>
        <taxon>Mammalia</taxon>
        <taxon>Eutheria</taxon>
        <taxon>Euarchontoglires</taxon>
        <taxon>Glires</taxon>
        <taxon>Rodentia</taxon>
        <taxon>Myomorpha</taxon>
        <taxon>Muroidea</taxon>
        <taxon>Muridae</taxon>
        <taxon>Murinae</taxon>
        <taxon>Mus</taxon>
        <taxon>Mus</taxon>
    </lineage>
</organism>
<reference key="1">
    <citation type="journal article" date="2009" name="PLoS Biol.">
        <title>Lineage-specific biology revealed by a finished genome assembly of the mouse.</title>
        <authorList>
            <person name="Church D.M."/>
            <person name="Goodstadt L."/>
            <person name="Hillier L.W."/>
            <person name="Zody M.C."/>
            <person name="Goldstein S."/>
            <person name="She X."/>
            <person name="Bult C.J."/>
            <person name="Agarwala R."/>
            <person name="Cherry J.L."/>
            <person name="DiCuccio M."/>
            <person name="Hlavina W."/>
            <person name="Kapustin Y."/>
            <person name="Meric P."/>
            <person name="Maglott D."/>
            <person name="Birtle Z."/>
            <person name="Marques A.C."/>
            <person name="Graves T."/>
            <person name="Zhou S."/>
            <person name="Teague B."/>
            <person name="Potamousis K."/>
            <person name="Churas C."/>
            <person name="Place M."/>
            <person name="Herschleb J."/>
            <person name="Runnheim R."/>
            <person name="Forrest D."/>
            <person name="Amos-Landgraf J."/>
            <person name="Schwartz D.C."/>
            <person name="Cheng Z."/>
            <person name="Lindblad-Toh K."/>
            <person name="Eichler E.E."/>
            <person name="Ponting C.P."/>
        </authorList>
    </citation>
    <scope>NUCLEOTIDE SEQUENCE [LARGE SCALE GENOMIC DNA]</scope>
    <source>
        <strain>C57BL/6J</strain>
    </source>
</reference>
<feature type="chain" id="PRO_0000348962" description="Keratin-associated protein 29-1">
    <location>
        <begin position="1"/>
        <end position="342"/>
    </location>
</feature>
<feature type="repeat" description="1">
    <location>
        <begin position="5"/>
        <end position="9"/>
    </location>
</feature>
<feature type="repeat" description="2">
    <location>
        <begin position="91"/>
        <end position="95"/>
    </location>
</feature>
<feature type="repeat" description="3">
    <location>
        <begin position="239"/>
        <end position="243"/>
    </location>
</feature>
<feature type="repeat" description="4">
    <location>
        <begin position="309"/>
        <end position="313"/>
    </location>
</feature>
<feature type="repeat" description="5">
    <location>
        <begin position="324"/>
        <end position="328"/>
    </location>
</feature>
<feature type="region of interest" description="5 X 5 AA repeats of C-C-X(3)">
    <location>
        <begin position="5"/>
        <end position="328"/>
    </location>
</feature>
<dbReference type="EMBL" id="AL592545">
    <property type="status" value="NOT_ANNOTATED_CDS"/>
    <property type="molecule type" value="Genomic_DNA"/>
</dbReference>
<dbReference type="RefSeq" id="NP_001365439.1">
    <property type="nucleotide sequence ID" value="NM_001378510.1"/>
</dbReference>
<dbReference type="STRING" id="10090.ENSMUSP00000100672"/>
<dbReference type="GlyGen" id="A2A5X4">
    <property type="glycosylation" value="1 site"/>
</dbReference>
<dbReference type="PaxDb" id="10090-ENSMUSP00000100672"/>
<dbReference type="Ensembl" id="ENSMUST00000105051.2">
    <property type="protein sequence ID" value="ENSMUSP00000100672.2"/>
    <property type="gene ID" value="ENSMUSG00000078254.2"/>
</dbReference>
<dbReference type="GeneID" id="100462664"/>
<dbReference type="AGR" id="MGI:3652056"/>
<dbReference type="MGI" id="MGI:3652056">
    <property type="gene designation" value="Krtap29-1"/>
</dbReference>
<dbReference type="VEuPathDB" id="HostDB:ENSMUSG00000078254"/>
<dbReference type="eggNOG" id="ENOG502RPU0">
    <property type="taxonomic scope" value="Eukaryota"/>
</dbReference>
<dbReference type="GeneTree" id="ENSGT00940000164459"/>
<dbReference type="HOGENOM" id="CLU_060880_0_0_1"/>
<dbReference type="InParanoid" id="A2A5X4"/>
<dbReference type="OMA" id="GQPTCDG"/>
<dbReference type="OrthoDB" id="9446848at2759"/>
<dbReference type="PhylomeDB" id="A2A5X4"/>
<dbReference type="TreeFam" id="TF339135"/>
<dbReference type="Reactome" id="R-MMU-6805567">
    <property type="pathway name" value="Keratinization"/>
</dbReference>
<dbReference type="PRO" id="PR:A2A5X4"/>
<dbReference type="Proteomes" id="UP000000589">
    <property type="component" value="Chromosome 11"/>
</dbReference>
<dbReference type="RNAct" id="A2A5X4">
    <property type="molecule type" value="protein"/>
</dbReference>
<dbReference type="Bgee" id="ENSMUSG00000078254">
    <property type="expression patterns" value="Expressed in lip and 1 other cell type or tissue"/>
</dbReference>
<dbReference type="GO" id="GO:0005829">
    <property type="term" value="C:cytosol"/>
    <property type="evidence" value="ECO:0007669"/>
    <property type="project" value="UniProtKB-ARBA"/>
</dbReference>
<dbReference type="GO" id="GO:0045095">
    <property type="term" value="C:keratin filament"/>
    <property type="evidence" value="ECO:0007669"/>
    <property type="project" value="InterPro"/>
</dbReference>
<dbReference type="InterPro" id="IPR002494">
    <property type="entry name" value="KAP"/>
</dbReference>
<dbReference type="Pfam" id="PF13885">
    <property type="entry name" value="Keratin_B2_2"/>
    <property type="match status" value="2"/>
</dbReference>
<keyword id="KW-0416">Keratin</keyword>
<keyword id="KW-1185">Reference proteome</keyword>
<keyword id="KW-0677">Repeat</keyword>
<proteinExistence type="inferred from homology"/>
<gene>
    <name type="primary">Krtap29-1</name>
    <name type="synonym">Gm14195</name>
    <name type="synonym">Kap29.2</name>
</gene>
<sequence>MADSCCPENPTAVPTVPTISTCSNGGSIRNAIRLPSSCRCRTWQLVTHQENRQGPDSVPVSSEPVSCPSTCFPETPCVGFICQPIGSHMACCASDTGGSPHPAASCQPSCLESAGCHTMCYENSSCHQSSGQGSACTSGSCQTACGPSASCDDRSCQPSCSEATSYAETPCLPAGCEAGSCQPTSCQGGSHQPTRGEGQLCQSVYYQPICYVLKSCQSTPCMSVSCQPLTCMCFCSQTCCVPPTCQPLHCQTTPIISFICQPVAPCQSPCFLKSSSKSASCVMISGQQICGGPTPDQSGCQSPSCHPPCCVTGLGQPSSSGPGCCPPTSPDICQAGTYGPTS</sequence>